<accession>P32354</accession>
<accession>D6VVD7</accession>
<protein>
    <recommendedName>
        <fullName>Minichromosome maintenance protein 10</fullName>
    </recommendedName>
    <alternativeName>
        <fullName>Protein DNA43</fullName>
    </alternativeName>
</protein>
<organism>
    <name type="scientific">Saccharomyces cerevisiae (strain ATCC 204508 / S288c)</name>
    <name type="common">Baker's yeast</name>
    <dbReference type="NCBI Taxonomy" id="559292"/>
    <lineage>
        <taxon>Eukaryota</taxon>
        <taxon>Fungi</taxon>
        <taxon>Dikarya</taxon>
        <taxon>Ascomycota</taxon>
        <taxon>Saccharomycotina</taxon>
        <taxon>Saccharomycetes</taxon>
        <taxon>Saccharomycetales</taxon>
        <taxon>Saccharomycetaceae</taxon>
        <taxon>Saccharomyces</taxon>
    </lineage>
</organism>
<gene>
    <name type="primary">MCM10</name>
    <name type="synonym">DNA43</name>
    <name type="ordered locus">YIL150C</name>
</gene>
<proteinExistence type="evidence at protein level"/>
<keyword id="KW-0131">Cell cycle</keyword>
<keyword id="KW-0235">DNA replication</keyword>
<keyword id="KW-0479">Metal-binding</keyword>
<keyword id="KW-0539">Nucleus</keyword>
<keyword id="KW-0597">Phosphoprotein</keyword>
<keyword id="KW-1185">Reference proteome</keyword>
<keyword id="KW-0832">Ubl conjugation</keyword>
<keyword id="KW-0862">Zinc</keyword>
<keyword id="KW-0863">Zinc-finger</keyword>
<dbReference type="EMBL" id="Z38059">
    <property type="protein sequence ID" value="CAA86128.1"/>
    <property type="molecule type" value="Genomic_DNA"/>
</dbReference>
<dbReference type="EMBL" id="M83540">
    <property type="protein sequence ID" value="AAA34574.1"/>
    <property type="molecule type" value="Genomic_DNA"/>
</dbReference>
<dbReference type="EMBL" id="BK006942">
    <property type="protein sequence ID" value="DAA08403.1"/>
    <property type="molecule type" value="Genomic_DNA"/>
</dbReference>
<dbReference type="PIR" id="S48384">
    <property type="entry name" value="S48384"/>
</dbReference>
<dbReference type="RefSeq" id="NP_012116.1">
    <property type="nucleotide sequence ID" value="NM_001179498.1"/>
</dbReference>
<dbReference type="SMR" id="P32354"/>
<dbReference type="BioGRID" id="34842">
    <property type="interactions" value="393"/>
</dbReference>
<dbReference type="DIP" id="DIP-1293N"/>
<dbReference type="FunCoup" id="P32354">
    <property type="interactions" value="72"/>
</dbReference>
<dbReference type="IntAct" id="P32354">
    <property type="interactions" value="23"/>
</dbReference>
<dbReference type="MINT" id="P32354"/>
<dbReference type="STRING" id="4932.YIL150C"/>
<dbReference type="iPTMnet" id="P32354"/>
<dbReference type="PaxDb" id="4932-YIL150C"/>
<dbReference type="PeptideAtlas" id="P32354"/>
<dbReference type="EnsemblFungi" id="YIL150C_mRNA">
    <property type="protein sequence ID" value="YIL150C"/>
    <property type="gene ID" value="YIL150C"/>
</dbReference>
<dbReference type="GeneID" id="854656"/>
<dbReference type="KEGG" id="sce:YIL150C"/>
<dbReference type="AGR" id="SGD:S000001412"/>
<dbReference type="SGD" id="S000001412">
    <property type="gene designation" value="MCM10"/>
</dbReference>
<dbReference type="VEuPathDB" id="FungiDB:YIL150C"/>
<dbReference type="eggNOG" id="KOG3056">
    <property type="taxonomic scope" value="Eukaryota"/>
</dbReference>
<dbReference type="GeneTree" id="ENSGT00390000007134"/>
<dbReference type="HOGENOM" id="CLU_036499_0_0_1"/>
<dbReference type="InParanoid" id="P32354"/>
<dbReference type="OMA" id="FFDEKFQ"/>
<dbReference type="OrthoDB" id="273123at2759"/>
<dbReference type="BioCyc" id="YEAST:G3O-31399-MONOMER"/>
<dbReference type="Reactome" id="R-SCE-176187">
    <property type="pathway name" value="Activation of ATR in response to replication stress"/>
</dbReference>
<dbReference type="Reactome" id="R-SCE-68962">
    <property type="pathway name" value="Activation of the pre-replicative complex"/>
</dbReference>
<dbReference type="BioGRID-ORCS" id="854656">
    <property type="hits" value="1 hit in 10 CRISPR screens"/>
</dbReference>
<dbReference type="PRO" id="PR:P32354"/>
<dbReference type="Proteomes" id="UP000002311">
    <property type="component" value="Chromosome IX"/>
</dbReference>
<dbReference type="RNAct" id="P32354">
    <property type="molecule type" value="protein"/>
</dbReference>
<dbReference type="GO" id="GO:0000781">
    <property type="term" value="C:chromosome, telomeric region"/>
    <property type="evidence" value="ECO:0007669"/>
    <property type="project" value="GOC"/>
</dbReference>
<dbReference type="GO" id="GO:0043596">
    <property type="term" value="C:nuclear replication fork"/>
    <property type="evidence" value="ECO:0000318"/>
    <property type="project" value="GO_Central"/>
</dbReference>
<dbReference type="GO" id="GO:0005634">
    <property type="term" value="C:nucleus"/>
    <property type="evidence" value="ECO:0000314"/>
    <property type="project" value="SGD"/>
</dbReference>
<dbReference type="GO" id="GO:0005657">
    <property type="term" value="C:replication fork"/>
    <property type="evidence" value="ECO:0000315"/>
    <property type="project" value="SGD"/>
</dbReference>
<dbReference type="GO" id="GO:0003688">
    <property type="term" value="F:DNA replication origin binding"/>
    <property type="evidence" value="ECO:0000314"/>
    <property type="project" value="SGD"/>
</dbReference>
<dbReference type="GO" id="GO:0003690">
    <property type="term" value="F:double-stranded DNA binding"/>
    <property type="evidence" value="ECO:0000314"/>
    <property type="project" value="SGD"/>
</dbReference>
<dbReference type="GO" id="GO:0003697">
    <property type="term" value="F:single-stranded DNA binding"/>
    <property type="evidence" value="ECO:0000314"/>
    <property type="project" value="SGD"/>
</dbReference>
<dbReference type="GO" id="GO:0008270">
    <property type="term" value="F:zinc ion binding"/>
    <property type="evidence" value="ECO:0007669"/>
    <property type="project" value="UniProtKB-KW"/>
</dbReference>
<dbReference type="GO" id="GO:0006270">
    <property type="term" value="P:DNA replication initiation"/>
    <property type="evidence" value="ECO:0000315"/>
    <property type="project" value="SGD"/>
</dbReference>
<dbReference type="GO" id="GO:0006271">
    <property type="term" value="P:DNA strand elongation involved in DNA replication"/>
    <property type="evidence" value="ECO:0000315"/>
    <property type="project" value="SGD"/>
</dbReference>
<dbReference type="GO" id="GO:0000727">
    <property type="term" value="P:double-strand break repair via break-induced replication"/>
    <property type="evidence" value="ECO:0000315"/>
    <property type="project" value="SGD"/>
</dbReference>
<dbReference type="GO" id="GO:1902969">
    <property type="term" value="P:mitotic DNA replication"/>
    <property type="evidence" value="ECO:0000314"/>
    <property type="project" value="SGD"/>
</dbReference>
<dbReference type="GO" id="GO:0030466">
    <property type="term" value="P:silent mating-type cassette heterochromatin formation"/>
    <property type="evidence" value="ECO:0000315"/>
    <property type="project" value="SGD"/>
</dbReference>
<dbReference type="GO" id="GO:0031509">
    <property type="term" value="P:subtelomeric heterochromatin formation"/>
    <property type="evidence" value="ECO:0000315"/>
    <property type="project" value="SGD"/>
</dbReference>
<dbReference type="CDD" id="cd03524">
    <property type="entry name" value="RPA2_OBF_family"/>
    <property type="match status" value="1"/>
</dbReference>
<dbReference type="FunFam" id="2.40.50.140:FF:000368">
    <property type="entry name" value="Mcm10p"/>
    <property type="match status" value="1"/>
</dbReference>
<dbReference type="Gene3D" id="2.40.50.140">
    <property type="entry name" value="Nucleic acid-binding proteins"/>
    <property type="match status" value="1"/>
</dbReference>
<dbReference type="InterPro" id="IPR040184">
    <property type="entry name" value="Mcm10"/>
</dbReference>
<dbReference type="InterPro" id="IPR055065">
    <property type="entry name" value="MCM10_OB"/>
</dbReference>
<dbReference type="InterPro" id="IPR012340">
    <property type="entry name" value="NA-bd_OB-fold"/>
</dbReference>
<dbReference type="InterPro" id="IPR015408">
    <property type="entry name" value="Znf_Mcm10/DnaG"/>
</dbReference>
<dbReference type="PANTHER" id="PTHR13454">
    <property type="entry name" value="PROTEIN MCM10 HOMOLOG"/>
    <property type="match status" value="1"/>
</dbReference>
<dbReference type="PANTHER" id="PTHR13454:SF11">
    <property type="entry name" value="PROTEIN MCM10 HOMOLOG"/>
    <property type="match status" value="1"/>
</dbReference>
<dbReference type="Pfam" id="PF22379">
    <property type="entry name" value="MCM10_OB"/>
    <property type="match status" value="1"/>
</dbReference>
<dbReference type="Pfam" id="PF09329">
    <property type="entry name" value="zf-primase"/>
    <property type="match status" value="1"/>
</dbReference>
<dbReference type="SUPFAM" id="SSF50249">
    <property type="entry name" value="Nucleic acid-binding proteins"/>
    <property type="match status" value="1"/>
</dbReference>
<evidence type="ECO:0000250" key="1"/>
<evidence type="ECO:0000256" key="2">
    <source>
        <dbReference type="SAM" id="MobiDB-lite"/>
    </source>
</evidence>
<evidence type="ECO:0000269" key="3">
    <source>
    </source>
</evidence>
<evidence type="ECO:0000269" key="4">
    <source>
    </source>
</evidence>
<evidence type="ECO:0000269" key="5">
    <source>
    </source>
</evidence>
<evidence type="ECO:0000269" key="6">
    <source>
    </source>
</evidence>
<evidence type="ECO:0000269" key="7">
    <source>
    </source>
</evidence>
<evidence type="ECO:0000269" key="8">
    <source>
    </source>
</evidence>
<evidence type="ECO:0000269" key="9">
    <source>
    </source>
</evidence>
<evidence type="ECO:0000269" key="10">
    <source>
    </source>
</evidence>
<evidence type="ECO:0000269" key="11">
    <source>
    </source>
</evidence>
<evidence type="ECO:0000269" key="12">
    <source>
    </source>
</evidence>
<evidence type="ECO:0000269" key="13">
    <source>
    </source>
</evidence>
<evidence type="ECO:0000269" key="14">
    <source>
    </source>
</evidence>
<evidence type="ECO:0000305" key="15"/>
<evidence type="ECO:0007744" key="16">
    <source>
    </source>
</evidence>
<evidence type="ECO:0007744" key="17">
    <source>
    </source>
</evidence>
<feature type="chain" id="PRO_0000079949" description="Minichromosome maintenance protein 10">
    <location>
        <begin position="1"/>
        <end position="571"/>
    </location>
</feature>
<feature type="region of interest" description="Zinc finger-like">
    <location>
        <begin position="309"/>
        <end position="335"/>
    </location>
</feature>
<feature type="region of interest" description="Sufficient for nuclear localization">
    <location>
        <begin position="435"/>
        <end position="512"/>
    </location>
</feature>
<feature type="region of interest" description="Disordered" evidence="2">
    <location>
        <begin position="451"/>
        <end position="473"/>
    </location>
</feature>
<feature type="region of interest" description="Sufficient for nuclear localization">
    <location>
        <begin position="453"/>
        <end position="553"/>
    </location>
</feature>
<feature type="region of interest" description="Disordered" evidence="2">
    <location>
        <begin position="548"/>
        <end position="571"/>
    </location>
</feature>
<feature type="short sequence motif" description="Bipartite nuclear localization signal" evidence="1">
    <location>
        <begin position="435"/>
        <end position="451"/>
    </location>
</feature>
<feature type="short sequence motif" description="Bipartite nuclear localization signal" evidence="1">
    <location>
        <begin position="512"/>
        <end position="527"/>
    </location>
</feature>
<feature type="compositionally biased region" description="Basic and acidic residues" evidence="2">
    <location>
        <begin position="451"/>
        <end position="471"/>
    </location>
</feature>
<feature type="compositionally biased region" description="Basic and acidic residues" evidence="2">
    <location>
        <begin position="548"/>
        <end position="561"/>
    </location>
</feature>
<feature type="modified residue" description="Phosphothreonine" evidence="17">
    <location>
        <position position="17"/>
    </location>
</feature>
<feature type="modified residue" description="Phosphoserine" evidence="17">
    <location>
        <position position="18"/>
    </location>
</feature>
<feature type="modified residue" description="Phosphoserine" evidence="16">
    <location>
        <position position="453"/>
    </location>
</feature>
<feature type="modified residue" description="Phosphoserine" evidence="16">
    <location>
        <position position="454"/>
    </location>
</feature>
<feature type="mutagenesis site" description="Inhibits interaction with POL30/PCNA and abolishes cell proliferation." evidence="13">
    <original>Y</original>
    <variation>A</variation>
    <location>
        <position position="245"/>
    </location>
</feature>
<feature type="mutagenesis site" description="Temperature sensitive; loss of CDC17 stabilization." evidence="12">
    <original>G</original>
    <variation>A</variation>
    <variation>D</variation>
    <location>
        <position position="261"/>
    </location>
</feature>
<feature type="mutagenesis site" description="Temperature sensitive; loss of CDC17 stabilization." evidence="12">
    <original>N</original>
    <variation>D</variation>
    <variation>I</variation>
    <location>
        <position position="268"/>
    </location>
</feature>
<feature type="mutagenesis site" description="In mcm10-1; diminishes interaction with MCM7.">
    <original>P</original>
    <variation>L</variation>
    <location>
        <position position="269"/>
    </location>
</feature>
<feature type="mutagenesis site" description="In mcm10-43; abolishes self-association and diminishes interaction with MCM7." evidence="5">
    <original>C</original>
    <variation>Y</variation>
    <location>
        <position position="320"/>
    </location>
</feature>
<feature type="mutagenesis site" description="Abolishes self-association; when associated with L-335." evidence="5">
    <original>C</original>
    <variation>G</variation>
    <location>
        <position position="332"/>
    </location>
</feature>
<feature type="mutagenesis site" description="Abolishes self-association; when associated with G-332." evidence="5">
    <original>H</original>
    <variation>L</variation>
    <location>
        <position position="335"/>
    </location>
</feature>
<feature type="mutagenesis site" description="No effect on nuclear localization." evidence="6">
    <original>RRR</original>
    <variation>GGG</variation>
    <location>
        <begin position="449"/>
        <end position="451"/>
    </location>
</feature>
<feature type="sequence conflict" description="In Ref. 1; AAA34574." evidence="15" ref="1">
    <original>Q</original>
    <variation>H</variation>
    <location>
        <position position="38"/>
    </location>
</feature>
<feature type="sequence conflict" description="In Ref. 1; AAA34574." evidence="15" ref="1">
    <original>D</original>
    <variation>H</variation>
    <location>
        <position position="458"/>
    </location>
</feature>
<feature type="sequence conflict" description="In Ref. 1." evidence="15" ref="1">
    <original>ISQVLKSSVSGSEPKNNLLGKKKTVINDLLHYKKEKVILAPSKNEWFKKRSHREEVWQKHFGSKETKETSDGSASDLEII</original>
    <variation>NFPKYSSLLYQGANLRTTYSVKKKLL</variation>
    <location>
        <begin position="492"/>
        <end position="571"/>
    </location>
</feature>
<name>MCM10_YEAST</name>
<comment type="function">
    <text evidence="3 4 8 9 10 11 12 14">Required for DNA synthesis. Required for entry into or completion of S phase. Involved in DNA replication and seems to participate in the activation of the pre-replication complex (pre-RC) and in transcription elongation. May play a role as a key coordinator in assembling the replication fork. Proposed to function at replication origins following the binding of the MCM2-7 complex prior to the recruitment of CDC45. Probably is required to stimulate phosphorylation of the MCM2-7 complex by the CDC7-DBF4 kinase complex. May recruit the DNA polymerase alpha:primase complex to replication origins and is required to maintain it on chromatin independently of CDC45. May also play a role in transcriptional silencing.</text>
</comment>
<comment type="subunit">
    <text evidence="4 8 9 11 12 13 14">Self-associates; assembles into large homomultimeric complexes of approximately 800 kDa. Associates with the MCM2-7 complex and the DNA polymerase alpha:primase complex. Interacts with ORC1, ORC2, MCM2, MCM3, CDC54/MCM4, MCM6, CDC47/MCM7, RFA2, CDC45, POL1, PRI2, POL12, SIR2 and SIR3. The diubiquitinated form interacts with POL30/PCNA C-terminus.</text>
</comment>
<comment type="interaction">
    <interactant intactId="EBI-5965">
        <id>P32354</id>
    </interactant>
    <interactant intactId="EBI-4292">
        <id>Q08032</id>
        <label>CDC45</label>
    </interactant>
    <organismsDiffer>false</organismsDiffer>
    <experiments>2</experiments>
</comment>
<comment type="interaction">
    <interactant intactId="EBI-5965">
        <id>P32354</id>
    </interactant>
    <interactant intactId="EBI-10533">
        <id>P29469</id>
        <label>MCM2</label>
    </interactant>
    <organismsDiffer>false</organismsDiffer>
    <experiments>3</experiments>
</comment>
<comment type="interaction">
    <interactant intactId="EBI-5965">
        <id>P32354</id>
    </interactant>
    <interactant intactId="EBI-10541">
        <id>P24279</id>
        <label>MCM3</label>
    </interactant>
    <organismsDiffer>false</organismsDiffer>
    <experiments>2</experiments>
</comment>
<comment type="interaction">
    <interactant intactId="EBI-5965">
        <id>P32354</id>
    </interactant>
    <interactant intactId="EBI-4326">
        <id>P30665</id>
        <label>MCM4</label>
    </interactant>
    <organismsDiffer>false</organismsDiffer>
    <experiments>4</experiments>
</comment>
<comment type="interaction">
    <interactant intactId="EBI-5965">
        <id>P32354</id>
    </interactant>
    <interactant intactId="EBI-10556">
        <id>P53091</id>
        <label>MCM6</label>
    </interactant>
    <organismsDiffer>false</organismsDiffer>
    <experiments>6</experiments>
</comment>
<comment type="interaction">
    <interactant intactId="EBI-5965">
        <id>P32354</id>
    </interactant>
    <interactant intactId="EBI-12993">
        <id>P15873</id>
        <label>POL30</label>
    </interactant>
    <organismsDiffer>false</organismsDiffer>
    <experiments>4</experiments>
</comment>
<comment type="subcellular location">
    <subcellularLocation>
        <location evidence="3 4 6 14">Nucleus</location>
    </subcellularLocation>
    <text>Colocalizes with ORC1 on chromatin independent from cell cycle. According to PubMed:15494305 is recruited to replication origins in a cell cycle regulated manner.</text>
</comment>
<comment type="domain">
    <text>The zinc finger-like domain binds a zinc ion and is involved in self-association.</text>
</comment>
<comment type="PTM">
    <text evidence="13">Diubiquitinated in a cell cycle-regulated manner. Ubiquitination first appears in late G(1) and persists throughout S phase.</text>
</comment>
<comment type="miscellaneous">
    <text evidence="7">Present with 1860 molecules/cell in log phase SD medium.</text>
</comment>
<comment type="similarity">
    <text evidence="15">Belongs to the MCM10 family.</text>
</comment>
<reference key="1">
    <citation type="journal article" date="1992" name="Yeast">
        <title>Genetic and molecular analysis of DNA43 and DNA52: two new cell-cycle genes in Saccharomyces cerevisiae.</title>
        <authorList>
            <person name="Solomon N.A."/>
            <person name="Wright M.B."/>
            <person name="Chang S."/>
            <person name="Buckley A.M."/>
            <person name="Dumas L.B."/>
            <person name="Gaber R.F."/>
        </authorList>
    </citation>
    <scope>NUCLEOTIDE SEQUENCE [GENOMIC DNA]</scope>
</reference>
<reference key="2">
    <citation type="journal article" date="1997" name="Nature">
        <title>The nucleotide sequence of Saccharomyces cerevisiae chromosome IX.</title>
        <authorList>
            <person name="Churcher C.M."/>
            <person name="Bowman S."/>
            <person name="Badcock K."/>
            <person name="Bankier A.T."/>
            <person name="Brown D."/>
            <person name="Chillingworth T."/>
            <person name="Connor R."/>
            <person name="Devlin K."/>
            <person name="Gentles S."/>
            <person name="Hamlin N."/>
            <person name="Harris D.E."/>
            <person name="Horsnell T."/>
            <person name="Hunt S."/>
            <person name="Jagels K."/>
            <person name="Jones M."/>
            <person name="Lye G."/>
            <person name="Moule S."/>
            <person name="Odell C."/>
            <person name="Pearson D."/>
            <person name="Rajandream M.A."/>
            <person name="Rice P."/>
            <person name="Rowley N."/>
            <person name="Skelton J."/>
            <person name="Smith V."/>
            <person name="Walsh S.V."/>
            <person name="Whitehead S."/>
            <person name="Barrell B.G."/>
        </authorList>
    </citation>
    <scope>NUCLEOTIDE SEQUENCE [LARGE SCALE GENOMIC DNA]</scope>
    <source>
        <strain>ATCC 204508 / S288c</strain>
    </source>
</reference>
<reference key="3">
    <citation type="journal article" date="2014" name="G3 (Bethesda)">
        <title>The reference genome sequence of Saccharomyces cerevisiae: Then and now.</title>
        <authorList>
            <person name="Engel S.R."/>
            <person name="Dietrich F.S."/>
            <person name="Fisk D.G."/>
            <person name="Binkley G."/>
            <person name="Balakrishnan R."/>
            <person name="Costanzo M.C."/>
            <person name="Dwight S.S."/>
            <person name="Hitz B.C."/>
            <person name="Karra K."/>
            <person name="Nash R.S."/>
            <person name="Weng S."/>
            <person name="Wong E.D."/>
            <person name="Lloyd P."/>
            <person name="Skrzypek M.S."/>
            <person name="Miyasato S.R."/>
            <person name="Simison M."/>
            <person name="Cherry J.M."/>
        </authorList>
    </citation>
    <scope>GENOME REANNOTATION</scope>
    <source>
        <strain>ATCC 204508 / S288c</strain>
    </source>
</reference>
<reference key="4">
    <citation type="journal article" date="1997" name="Mol. Cell. Biol.">
        <title>A lesion in the DNA replication initiation factor Mcm10 induces pausing of elongation forks through chromosomal replication origins in Saccharomyces cerevisiae.</title>
        <authorList>
            <person name="Merchant A.M."/>
            <person name="Kawasaki Y."/>
            <person name="Chen Y."/>
            <person name="Lei M."/>
            <person name="Tye B.K."/>
        </authorList>
    </citation>
    <scope>FUNCTION</scope>
    <scope>SUBCELLULAR LOCATION</scope>
    <scope>INTERACTION WITH MCM2; MCM3; MCM4; MCM6 AND MCM7</scope>
</reference>
<reference key="5">
    <citation type="journal article" date="2003" name="Curr. Genet.">
        <title>Two bipartite NLSs mediate constitutive nuclear localization of Mcm10.</title>
        <authorList>
            <person name="Burich R."/>
            <person name="Lei M."/>
        </authorList>
    </citation>
    <scope>SUBCELLULAR LOCATION</scope>
    <scope>MUTAGENESIS OF 449-ARG--ARG-451</scope>
</reference>
<reference key="6">
    <citation type="journal article" date="2003" name="Nature">
        <title>Global analysis of protein expression in yeast.</title>
        <authorList>
            <person name="Ghaemmaghami S."/>
            <person name="Huh W.-K."/>
            <person name="Bower K."/>
            <person name="Howson R.W."/>
            <person name="Belle A."/>
            <person name="Dephoure N."/>
            <person name="O'Shea E.K."/>
            <person name="Weissman J.S."/>
        </authorList>
    </citation>
    <scope>LEVEL OF PROTEIN EXPRESSION [LARGE SCALE ANALYSIS]</scope>
</reference>
<reference key="7">
    <citation type="journal article" date="2000" name="Genes Cells">
        <title>Interactions between Mcm10p and other replication factors are required for proper initiation and elongation of chromosomal DNA replication in Saccharomyces cerevisiae.</title>
        <authorList>
            <person name="Kawasaki Y."/>
            <person name="Hiraga S."/>
            <person name="Sugino A."/>
        </authorList>
    </citation>
    <scope>FUNCTION</scope>
    <scope>SUBCELLULAR LOCATION</scope>
    <scope>INTERACTION WITH ORC1 AND ORC2</scope>
</reference>
<reference key="8">
    <citation type="journal article" date="2000" name="Genes Dev.">
        <title>Mcm10 and the MCM2-7 complex interact to initiate DNA synthesis and to release replication factors from origins.</title>
        <authorList>
            <person name="Homesley L."/>
            <person name="Lei M."/>
            <person name="Kawasaki Y."/>
            <person name="Sawyer S."/>
            <person name="Christensen T."/>
            <person name="Tye B.K."/>
        </authorList>
    </citation>
    <scope>FUNCTION</scope>
    <scope>SUBCELLULAR LOCATION</scope>
    <scope>MUTANTS MCM10-1 AND MCM10-43</scope>
</reference>
<reference key="9">
    <citation type="journal article" date="2003" name="J. Biol. Chem.">
        <title>A novel zinc finger is required for Mcm10 homocomplex assembly.</title>
        <authorList>
            <person name="Cook C.R."/>
            <person name="Kung G."/>
            <person name="Peterson F.C."/>
            <person name="Volkman B.F."/>
            <person name="Lei M."/>
        </authorList>
    </citation>
    <scope>ZINC-BINDING</scope>
    <scope>SELF-ASSOCIATION</scope>
    <scope>MUTAGENESIS OF CYS-320; CYS-332 AND HIS-335</scope>
</reference>
<reference key="10">
    <citation type="journal article" date="2004" name="J. Mol. Biol.">
        <title>Mcm10 and Cdc45 cooperate in origin activation in Saccharomyces cerevisiae.</title>
        <authorList>
            <person name="Sawyer S.L."/>
            <person name="Cheng I.H."/>
            <person name="Chai W."/>
            <person name="Tye B.K."/>
        </authorList>
    </citation>
    <scope>FUNCTION</scope>
    <scope>INTERACTION WITH CDC45</scope>
</reference>
<reference key="11">
    <citation type="journal article" date="2004" name="Mol. Cell">
        <title>Mcm10 regulates the stability and chromatin association of DNA polymerase-alpha.</title>
        <authorList>
            <person name="Ricke R.M."/>
            <person name="Bielinsky A.-K."/>
        </authorList>
    </citation>
    <scope>FUNCTION</scope>
    <scope>INTERACTION WITH PRI2 AND RFA2</scope>
</reference>
<reference key="12">
    <citation type="journal article" date="2005" name="Genetics">
        <title>Mcm10 is required for the maintenance of transcriptional silencing in Saccharomyces cerevisiae.</title>
        <authorList>
            <person name="Liachko I."/>
            <person name="Tye B.K."/>
        </authorList>
    </citation>
    <scope>FUNCTION</scope>
</reference>
<reference key="13">
    <citation type="journal article" date="2005" name="Mol. Biol. Rep.">
        <title>Dual roles for Mcm10 in DNA replication initiation and silencing at the mating-type loci.</title>
        <authorList>
            <person name="Douglas N.L."/>
            <person name="Dozier S.K."/>
            <person name="Donato J.J."/>
        </authorList>
    </citation>
    <scope>FUNCTION IN TRANSCRIPTIONAL SILENCING</scope>
    <scope>INTERACTION WITH SIR2 AND SIR3</scope>
</reference>
<reference key="14">
    <citation type="journal article" date="2006" name="J. Biol. Chem.">
        <title>A conserved Hsp10-like domain in Mcm10 is required to stabilize the catalytic subunit of DNA polymerase-alpha in budding yeast.</title>
        <authorList>
            <person name="Ricke R.M."/>
            <person name="Bielinsky A.-K."/>
        </authorList>
    </citation>
    <scope>FUNCTION</scope>
    <scope>INTERACTION WITH POL1; PRI2 AND POL12</scope>
    <scope>MUTAGENESIS OF GLY-261 AND ASN-268</scope>
</reference>
<reference key="15">
    <citation type="journal article" date="2006" name="Mol. Cell. Biol.">
        <title>Interaction between PCNA and diubiquitinated Mcm10 is essential for cell growth in budding yeast.</title>
        <authorList>
            <person name="Das-Bradoo S."/>
            <person name="Ricke R.M."/>
            <person name="Bielinsky A.-K."/>
        </authorList>
    </citation>
    <scope>INTERACTION WITH POL30</scope>
    <scope>UBIQUITINATION</scope>
    <scope>MUTAGENESIS OF TYR-245</scope>
</reference>
<reference key="16">
    <citation type="journal article" date="2007" name="Proc. Natl. Acad. Sci. U.S.A.">
        <title>Analysis of phosphorylation sites on proteins from Saccharomyces cerevisiae by electron transfer dissociation (ETD) mass spectrometry.</title>
        <authorList>
            <person name="Chi A."/>
            <person name="Huttenhower C."/>
            <person name="Geer L.Y."/>
            <person name="Coon J.J."/>
            <person name="Syka J.E.P."/>
            <person name="Bai D.L."/>
            <person name="Shabanowitz J."/>
            <person name="Burke D.J."/>
            <person name="Troyanskaya O.G."/>
            <person name="Hunt D.F."/>
        </authorList>
    </citation>
    <scope>PHOSPHORYLATION [LARGE SCALE ANALYSIS] AT SER-453 AND SER-454</scope>
    <scope>IDENTIFICATION BY MASS SPECTROMETRY [LARGE SCALE ANALYSIS]</scope>
</reference>
<reference key="17">
    <citation type="journal article" date="2009" name="Science">
        <title>Global analysis of Cdk1 substrate phosphorylation sites provides insights into evolution.</title>
        <authorList>
            <person name="Holt L.J."/>
            <person name="Tuch B.B."/>
            <person name="Villen J."/>
            <person name="Johnson A.D."/>
            <person name="Gygi S.P."/>
            <person name="Morgan D.O."/>
        </authorList>
    </citation>
    <scope>PHOSPHORYLATION [LARGE SCALE ANALYSIS] AT THR-17 AND SER-18</scope>
    <scope>IDENTIFICATION BY MASS SPECTROMETRY [LARGE SCALE ANALYSIS]</scope>
</reference>
<sequence length="571" mass="65815">MNDPREILAVDPYNNITSDEEDEQAIARELEFMERKRQALVERLKRKQEFKKPQDPNFEAIEVPQSPTKNRVKVGSHNATQQGTKFEGSNINEVRLSQLQQQPKPPASTTTYFMEKFQNAKKNEDKQIAKFESMMNARVHTFSTDEKKYVPIITNELESFSNLWVKKRYIPEDDLKRALHEIKILRLGKLFAKIRPPKFQEPEYANWATVGLISHKSDIKFTSSEKPVKFFMFTITDFQHTLDVYIFGKKGVERYYNLRLGDVIAILNPEVLPWRPSGRGNFIKSFNLRISHDFKCILEIGSSRDLGWCPIVNKKTHKKCGSPINISLHKCCDYHREVQFRGTSAKRIELNGGYALGAPTKVDSQPSLYKAKGENGFNIIKGTRKRLSEEEERLKKSSHNFTNSNSAKAFFDEKFQNPDMLANLDNKRRKIIETKKSTALSRELGKIMRRRESSGLEDKSVGERQKMKRTTESALQTGLIQRLGFDPTHGKISQVLKSSVSGSEPKNNLLGKKKTVINDLLHYKKEKVILAPSKNEWFKKRSHREEVWQKHFGSKETKETSDGSASDLEII</sequence>